<accession>Q50758</accession>
<sequence>MKLAILGAGCYRTHAASGITNFSRACEVAEMVGKPEIAMTHSTITMGAELKELAGVDEVVVADPVFDNQFTVIDDFAYEDVIEAHKEDPEKIMPQIREKVNEVAKELPKPPEGAIHFTHPEDLGFEITTDDREAVADADFIMTWFPKGDMQPGIINKFIDDIKPGAIVTHACTIPTTKFYKIFEEKHGDLVTRPETLNVTSYHPGAVPEMKGQVYIAEGYASEEAINTLFELGQKARGNAYKLPAELLGPVCDMCSALTAITYAGILTYRDSVTQVLGAPAGFAQMMAKESLEQLTALMDKVGIDKMEESLDPGALLGTADSMNFGASAEILPTVFEVLEKRKK</sequence>
<dbReference type="EC" id="1.12.98.2"/>
<dbReference type="EMBL" id="X92711">
    <property type="protein sequence ID" value="CAA63376.1"/>
    <property type="molecule type" value="Genomic_DNA"/>
</dbReference>
<dbReference type="SMR" id="Q50758"/>
<dbReference type="UniPathway" id="UPA00640">
    <property type="reaction ID" value="UER00696"/>
</dbReference>
<dbReference type="GO" id="GO:0047068">
    <property type="term" value="F:N5,N10-methenyltetrahydromethanopterin hydrogenase activity"/>
    <property type="evidence" value="ECO:0007669"/>
    <property type="project" value="UniProtKB-UniRule"/>
</dbReference>
<dbReference type="GO" id="GO:0019386">
    <property type="term" value="P:methanogenesis, from carbon dioxide"/>
    <property type="evidence" value="ECO:0007669"/>
    <property type="project" value="UniProtKB-UniRule"/>
</dbReference>
<dbReference type="GO" id="GO:0006730">
    <property type="term" value="P:one-carbon metabolic process"/>
    <property type="evidence" value="ECO:0007669"/>
    <property type="project" value="UniProtKB-UniRule"/>
</dbReference>
<dbReference type="FunFam" id="1.20.120.1300:FF:000001">
    <property type="entry name" value="5,10-methenyltetrahydromethanopterin hydrogenase"/>
    <property type="match status" value="1"/>
</dbReference>
<dbReference type="FunFam" id="3.40.50.720:FF:001042">
    <property type="entry name" value="5,10-methenyltetrahydromethanopterin hydrogenase"/>
    <property type="match status" value="1"/>
</dbReference>
<dbReference type="Gene3D" id="1.20.120.1300">
    <property type="entry name" value="Hmd, C-terminal helical subdomain"/>
    <property type="match status" value="1"/>
</dbReference>
<dbReference type="Gene3D" id="3.40.50.720">
    <property type="entry name" value="NAD(P)-binding Rossmann-like Domain"/>
    <property type="match status" value="1"/>
</dbReference>
<dbReference type="HAMAP" id="MF_01090">
    <property type="entry name" value="HMD"/>
    <property type="match status" value="1"/>
</dbReference>
<dbReference type="InterPro" id="IPR008927">
    <property type="entry name" value="6-PGluconate_DH-like_C_sf"/>
</dbReference>
<dbReference type="InterPro" id="IPR010062">
    <property type="entry name" value="HMD"/>
</dbReference>
<dbReference type="InterPro" id="IPR004889">
    <property type="entry name" value="HMD_C"/>
</dbReference>
<dbReference type="InterPro" id="IPR038182">
    <property type="entry name" value="HMD_C_sf"/>
</dbReference>
<dbReference type="InterPro" id="IPR055205">
    <property type="entry name" value="HMD_N"/>
</dbReference>
<dbReference type="InterPro" id="IPR024190">
    <property type="entry name" value="METHMP_Hmd"/>
</dbReference>
<dbReference type="InterPro" id="IPR036291">
    <property type="entry name" value="NAD(P)-bd_dom_sf"/>
</dbReference>
<dbReference type="NCBIfam" id="TIGR01723">
    <property type="entry name" value="hmd_TIGR"/>
    <property type="match status" value="1"/>
</dbReference>
<dbReference type="Pfam" id="PF03201">
    <property type="entry name" value="HMD"/>
    <property type="match status" value="1"/>
</dbReference>
<dbReference type="Pfam" id="PF22616">
    <property type="entry name" value="HMD_N"/>
    <property type="match status" value="1"/>
</dbReference>
<dbReference type="PIRSF" id="PIRSF016158">
    <property type="entry name" value="HMD"/>
    <property type="match status" value="1"/>
</dbReference>
<dbReference type="PIRSF" id="PIRSF500165">
    <property type="entry name" value="HMDI"/>
    <property type="match status" value="1"/>
</dbReference>
<dbReference type="SUPFAM" id="SSF48179">
    <property type="entry name" value="6-phosphogluconate dehydrogenase C-terminal domain-like"/>
    <property type="match status" value="1"/>
</dbReference>
<dbReference type="SUPFAM" id="SSF51735">
    <property type="entry name" value="NAD(P)-binding Rossmann-fold domains"/>
    <property type="match status" value="1"/>
</dbReference>
<gene>
    <name type="primary">hmd</name>
</gene>
<evidence type="ECO:0000250" key="1"/>
<evidence type="ECO:0000305" key="2"/>
<reference key="1">
    <citation type="submission" date="1995-11" db="EMBL/GenBank/DDBJ databases">
        <authorList>
            <person name="Vaupel M."/>
        </authorList>
    </citation>
    <scope>NUCLEOTIDE SEQUENCE [GENOMIC DNA]</scope>
    <source>
        <strain>ATCC 43574 / DSM 3664 / OCM 36 / CB12</strain>
    </source>
</reference>
<organism>
    <name type="scientific">Methanothermobacter thermautotrophicus</name>
    <name type="common">Methanobacterium thermoformicicum</name>
    <dbReference type="NCBI Taxonomy" id="145262"/>
    <lineage>
        <taxon>Archaea</taxon>
        <taxon>Methanobacteriati</taxon>
        <taxon>Methanobacteriota</taxon>
        <taxon>Methanomada group</taxon>
        <taxon>Methanobacteria</taxon>
        <taxon>Methanobacteriales</taxon>
        <taxon>Methanobacteriaceae</taxon>
        <taxon>Methanothermobacter</taxon>
    </lineage>
</organism>
<protein>
    <recommendedName>
        <fullName>5,10-methenyltetrahydromethanopterin hydrogenase</fullName>
        <ecNumber>1.12.98.2</ecNumber>
    </recommendedName>
    <alternativeName>
        <fullName>H(2)-dependent methylene-H(4)MPT dehydrogenase</fullName>
    </alternativeName>
    <alternativeName>
        <fullName>H(2)-forming N(5),N(10)-methylenetetrahydromethanopterin dehydrogenase</fullName>
    </alternativeName>
    <alternativeName>
        <fullName>N(5),N(10)-methenyltetrahydromethanopterin hydrogenase</fullName>
    </alternativeName>
</protein>
<name>HMD_METTF</name>
<comment type="function">
    <text evidence="1">Catalyzes the reversible reduction of methenyl-H(4)MPT(+) to methylene-H(4)MPT.</text>
</comment>
<comment type="catalytic activity">
    <reaction>
        <text>5,10-methenyl-5,6,7,8-tetrahydromethanopterin + H2 = 5,10-methylenetetrahydromethanopterin + H(+)</text>
        <dbReference type="Rhea" id="RHEA:20017"/>
        <dbReference type="ChEBI" id="CHEBI:15378"/>
        <dbReference type="ChEBI" id="CHEBI:18276"/>
        <dbReference type="ChEBI" id="CHEBI:57818"/>
        <dbReference type="ChEBI" id="CHEBI:58337"/>
        <dbReference type="EC" id="1.12.98.2"/>
    </reaction>
</comment>
<comment type="pathway">
    <text>One-carbon metabolism; methanogenesis from CO(2); 5,10-methylene-5,6,7,8-tetrahydromethanopterin from 5,10-methenyl-5,6,7,8-tetrahydromethanopterin (hydrogen route): step 1/1.</text>
</comment>
<comment type="similarity">
    <text evidence="2">Belongs to the HMD family.</text>
</comment>
<feature type="chain" id="PRO_0000218510" description="5,10-methenyltetrahydromethanopterin hydrogenase">
    <location>
        <begin position="1"/>
        <end position="344"/>
    </location>
</feature>
<proteinExistence type="inferred from homology"/>
<keyword id="KW-0484">Methanogenesis</keyword>
<keyword id="KW-0554">One-carbon metabolism</keyword>
<keyword id="KW-0560">Oxidoreductase</keyword>